<accession>Q52M58</accession>
<accession>Q8N7D2</accession>
<name>CN177_HUMAN</name>
<organism>
    <name type="scientific">Homo sapiens</name>
    <name type="common">Human</name>
    <dbReference type="NCBI Taxonomy" id="9606"/>
    <lineage>
        <taxon>Eukaryota</taxon>
        <taxon>Metazoa</taxon>
        <taxon>Chordata</taxon>
        <taxon>Craniata</taxon>
        <taxon>Vertebrata</taxon>
        <taxon>Euteleostomi</taxon>
        <taxon>Mammalia</taxon>
        <taxon>Eutheria</taxon>
        <taxon>Euarchontoglires</taxon>
        <taxon>Primates</taxon>
        <taxon>Haplorrhini</taxon>
        <taxon>Catarrhini</taxon>
        <taxon>Hominidae</taxon>
        <taxon>Homo</taxon>
    </lineage>
</organism>
<comment type="function">
    <text evidence="4">May play a role in the flagellum biology.</text>
</comment>
<comment type="subcellular location">
    <subcellularLocation>
        <location evidence="3">Cytoplasm</location>
    </subcellularLocation>
    <subcellularLocation>
        <location evidence="3">Nucleus</location>
    </subcellularLocation>
    <subcellularLocation>
        <location evidence="3">Cell projection</location>
        <location evidence="3">Cilium</location>
        <location evidence="3">Flagellum</location>
    </subcellularLocation>
    <text evidence="3">Detected in the cytoplasm of germ cells in all stages of development up to the cytoplasmic lobes of elongated spermatids, whereas it appeared stronger in the nucleus of premeiotic and meiotic germ cells. Localizes in the headpiece and midpiece of ejaculated sperm.</text>
</comment>
<comment type="tissue specificity">
    <text evidence="3">Expressed in testes and ejaculated spermatozoa (at protein level).</text>
</comment>
<keyword id="KW-0966">Cell projection</keyword>
<keyword id="KW-0969">Cilium</keyword>
<keyword id="KW-0963">Cytoplasm</keyword>
<keyword id="KW-0282">Flagellum</keyword>
<keyword id="KW-0539">Nucleus</keyword>
<keyword id="KW-1185">Reference proteome</keyword>
<feature type="chain" id="PRO_0000274267" description="Testis-specific protein LINC02914">
    <location>
        <begin position="1"/>
        <end position="125"/>
    </location>
</feature>
<feature type="region of interest" description="Disordered" evidence="1">
    <location>
        <begin position="1"/>
        <end position="45"/>
    </location>
</feature>
<feature type="compositionally biased region" description="Basic and acidic residues" evidence="1">
    <location>
        <begin position="1"/>
        <end position="12"/>
    </location>
</feature>
<feature type="sequence variant" id="VAR_030224" description="In dbSNP:rs17097718." evidence="2">
    <original>R</original>
    <variation>W</variation>
    <location>
        <position position="3"/>
    </location>
</feature>
<feature type="sequence variant" id="VAR_030225" description="In dbSNP:rs4905757.">
    <original>V</original>
    <variation>A</variation>
    <location>
        <position position="33"/>
    </location>
</feature>
<protein>
    <recommendedName>
        <fullName evidence="5">Testis-specific protein LINC02914</fullName>
    </recommendedName>
    <alternativeName>
        <fullName evidence="6">Long intergenic non-protein coding RNA 2914</fullName>
    </alternativeName>
</protein>
<sequence>MHRKEPGARLEATRGAARPHKQGTKPMITRPSVSQLGEGKCPSSQHLQSLRHNKQHALTLTKARCCGECSTCFCTEEKSECQRHEETSPGSCNHQIMSASTISAFCATPRFKQLFKGTVEQMSQM</sequence>
<gene>
    <name evidence="6" type="primary">LINC02914</name>
    <name type="synonym">C14orf177</name>
</gene>
<proteinExistence type="evidence at protein level"/>
<dbReference type="EMBL" id="AK098639">
    <property type="protein sequence ID" value="BAC05361.1"/>
    <property type="molecule type" value="mRNA"/>
</dbReference>
<dbReference type="EMBL" id="AL096821">
    <property type="status" value="NOT_ANNOTATED_CDS"/>
    <property type="molecule type" value="Genomic_DNA"/>
</dbReference>
<dbReference type="EMBL" id="BC093661">
    <property type="protein sequence ID" value="AAH93661.1"/>
    <property type="molecule type" value="mRNA"/>
</dbReference>
<dbReference type="RefSeq" id="NP_001333907.1">
    <property type="nucleotide sequence ID" value="NM_001346978.1"/>
</dbReference>
<dbReference type="RefSeq" id="NP_001333908.1">
    <property type="nucleotide sequence ID" value="NM_001346979.1"/>
</dbReference>
<dbReference type="RefSeq" id="NP_872366.2">
    <property type="nucleotide sequence ID" value="NM_182560.2"/>
</dbReference>
<dbReference type="STRING" id="9606.ENSP00000321360"/>
<dbReference type="GlyGen" id="Q52M58">
    <property type="glycosylation" value="2 sites, 1 O-linked glycan (2 sites)"/>
</dbReference>
<dbReference type="iPTMnet" id="Q52M58"/>
<dbReference type="PhosphoSitePlus" id="Q52M58"/>
<dbReference type="BioMuta" id="C14orf177"/>
<dbReference type="jPOST" id="Q52M58"/>
<dbReference type="PaxDb" id="9606-ENSP00000321360"/>
<dbReference type="UCSC" id="uc001yfz.3">
    <property type="organism name" value="human"/>
</dbReference>
<dbReference type="AGR" id="HGNC:26375"/>
<dbReference type="GeneCards" id="LINC02914"/>
<dbReference type="HGNC" id="HGNC:26375">
    <property type="gene designation" value="LINC02914"/>
</dbReference>
<dbReference type="neXtProt" id="NX_Q52M58"/>
<dbReference type="eggNOG" id="ENOG502TFG8">
    <property type="taxonomic scope" value="Eukaryota"/>
</dbReference>
<dbReference type="HOGENOM" id="CLU_1991869_0_0_1"/>
<dbReference type="InParanoid" id="Q52M58"/>
<dbReference type="PAN-GO" id="Q52M58">
    <property type="GO annotations" value="0 GO annotations based on evolutionary models"/>
</dbReference>
<dbReference type="PhylomeDB" id="Q52M58"/>
<dbReference type="TreeFam" id="TF340679"/>
<dbReference type="PathwayCommons" id="Q52M58"/>
<dbReference type="BioGRID-ORCS" id="283598">
    <property type="hits" value="11 hits in 1105 CRISPR screens"/>
</dbReference>
<dbReference type="GenomeRNAi" id="283598"/>
<dbReference type="Pharos" id="Q52M58">
    <property type="development level" value="Tdark"/>
</dbReference>
<dbReference type="PRO" id="PR:Q52M58"/>
<dbReference type="Proteomes" id="UP000005640">
    <property type="component" value="Chromosome 14"/>
</dbReference>
<dbReference type="RNAct" id="Q52M58">
    <property type="molecule type" value="protein"/>
</dbReference>
<dbReference type="GO" id="GO:0005737">
    <property type="term" value="C:cytoplasm"/>
    <property type="evidence" value="ECO:0007669"/>
    <property type="project" value="UniProtKB-SubCell"/>
</dbReference>
<dbReference type="GO" id="GO:0031514">
    <property type="term" value="C:motile cilium"/>
    <property type="evidence" value="ECO:0007669"/>
    <property type="project" value="UniProtKB-SubCell"/>
</dbReference>
<dbReference type="GO" id="GO:0005634">
    <property type="term" value="C:nucleus"/>
    <property type="evidence" value="ECO:0007669"/>
    <property type="project" value="UniProtKB-SubCell"/>
</dbReference>
<dbReference type="InterPro" id="IPR040821">
    <property type="entry name" value="LINC02914-like"/>
</dbReference>
<dbReference type="Pfam" id="PF17698">
    <property type="entry name" value="DUF5544"/>
    <property type="match status" value="1"/>
</dbReference>
<reference key="1">
    <citation type="journal article" date="2004" name="Nat. Genet.">
        <title>Complete sequencing and characterization of 21,243 full-length human cDNAs.</title>
        <authorList>
            <person name="Ota T."/>
            <person name="Suzuki Y."/>
            <person name="Nishikawa T."/>
            <person name="Otsuki T."/>
            <person name="Sugiyama T."/>
            <person name="Irie R."/>
            <person name="Wakamatsu A."/>
            <person name="Hayashi K."/>
            <person name="Sato H."/>
            <person name="Nagai K."/>
            <person name="Kimura K."/>
            <person name="Makita H."/>
            <person name="Sekine M."/>
            <person name="Obayashi M."/>
            <person name="Nishi T."/>
            <person name="Shibahara T."/>
            <person name="Tanaka T."/>
            <person name="Ishii S."/>
            <person name="Yamamoto J."/>
            <person name="Saito K."/>
            <person name="Kawai Y."/>
            <person name="Isono Y."/>
            <person name="Nakamura Y."/>
            <person name="Nagahari K."/>
            <person name="Murakami K."/>
            <person name="Yasuda T."/>
            <person name="Iwayanagi T."/>
            <person name="Wagatsuma M."/>
            <person name="Shiratori A."/>
            <person name="Sudo H."/>
            <person name="Hosoiri T."/>
            <person name="Kaku Y."/>
            <person name="Kodaira H."/>
            <person name="Kondo H."/>
            <person name="Sugawara M."/>
            <person name="Takahashi M."/>
            <person name="Kanda K."/>
            <person name="Yokoi T."/>
            <person name="Furuya T."/>
            <person name="Kikkawa E."/>
            <person name="Omura Y."/>
            <person name="Abe K."/>
            <person name="Kamihara K."/>
            <person name="Katsuta N."/>
            <person name="Sato K."/>
            <person name="Tanikawa M."/>
            <person name="Yamazaki M."/>
            <person name="Ninomiya K."/>
            <person name="Ishibashi T."/>
            <person name="Yamashita H."/>
            <person name="Murakawa K."/>
            <person name="Fujimori K."/>
            <person name="Tanai H."/>
            <person name="Kimata M."/>
            <person name="Watanabe M."/>
            <person name="Hiraoka S."/>
            <person name="Chiba Y."/>
            <person name="Ishida S."/>
            <person name="Ono Y."/>
            <person name="Takiguchi S."/>
            <person name="Watanabe S."/>
            <person name="Yosida M."/>
            <person name="Hotuta T."/>
            <person name="Kusano J."/>
            <person name="Kanehori K."/>
            <person name="Takahashi-Fujii A."/>
            <person name="Hara H."/>
            <person name="Tanase T.-O."/>
            <person name="Nomura Y."/>
            <person name="Togiya S."/>
            <person name="Komai F."/>
            <person name="Hara R."/>
            <person name="Takeuchi K."/>
            <person name="Arita M."/>
            <person name="Imose N."/>
            <person name="Musashino K."/>
            <person name="Yuuki H."/>
            <person name="Oshima A."/>
            <person name="Sasaki N."/>
            <person name="Aotsuka S."/>
            <person name="Yoshikawa Y."/>
            <person name="Matsunawa H."/>
            <person name="Ichihara T."/>
            <person name="Shiohata N."/>
            <person name="Sano S."/>
            <person name="Moriya S."/>
            <person name="Momiyama H."/>
            <person name="Satoh N."/>
            <person name="Takami S."/>
            <person name="Terashima Y."/>
            <person name="Suzuki O."/>
            <person name="Nakagawa S."/>
            <person name="Senoh A."/>
            <person name="Mizoguchi H."/>
            <person name="Goto Y."/>
            <person name="Shimizu F."/>
            <person name="Wakebe H."/>
            <person name="Hishigaki H."/>
            <person name="Watanabe T."/>
            <person name="Sugiyama A."/>
            <person name="Takemoto M."/>
            <person name="Kawakami B."/>
            <person name="Yamazaki M."/>
            <person name="Watanabe K."/>
            <person name="Kumagai A."/>
            <person name="Itakura S."/>
            <person name="Fukuzumi Y."/>
            <person name="Fujimori Y."/>
            <person name="Komiyama M."/>
            <person name="Tashiro H."/>
            <person name="Tanigami A."/>
            <person name="Fujiwara T."/>
            <person name="Ono T."/>
            <person name="Yamada K."/>
            <person name="Fujii Y."/>
            <person name="Ozaki K."/>
            <person name="Hirao M."/>
            <person name="Ohmori Y."/>
            <person name="Kawabata A."/>
            <person name="Hikiji T."/>
            <person name="Kobatake N."/>
            <person name="Inagaki H."/>
            <person name="Ikema Y."/>
            <person name="Okamoto S."/>
            <person name="Okitani R."/>
            <person name="Kawakami T."/>
            <person name="Noguchi S."/>
            <person name="Itoh T."/>
            <person name="Shigeta K."/>
            <person name="Senba T."/>
            <person name="Matsumura K."/>
            <person name="Nakajima Y."/>
            <person name="Mizuno T."/>
            <person name="Morinaga M."/>
            <person name="Sasaki M."/>
            <person name="Togashi T."/>
            <person name="Oyama M."/>
            <person name="Hata H."/>
            <person name="Watanabe M."/>
            <person name="Komatsu T."/>
            <person name="Mizushima-Sugano J."/>
            <person name="Satoh T."/>
            <person name="Shirai Y."/>
            <person name="Takahashi Y."/>
            <person name="Nakagawa K."/>
            <person name="Okumura K."/>
            <person name="Nagase T."/>
            <person name="Nomura N."/>
            <person name="Kikuchi H."/>
            <person name="Masuho Y."/>
            <person name="Yamashita R."/>
            <person name="Nakai K."/>
            <person name="Yada T."/>
            <person name="Nakamura Y."/>
            <person name="Ohara O."/>
            <person name="Isogai T."/>
            <person name="Sugano S."/>
        </authorList>
    </citation>
    <scope>NUCLEOTIDE SEQUENCE [LARGE SCALE MRNA]</scope>
    <source>
        <tissue>Testis</tissue>
    </source>
</reference>
<reference key="2">
    <citation type="journal article" date="2003" name="Nature">
        <title>The DNA sequence and analysis of human chromosome 14.</title>
        <authorList>
            <person name="Heilig R."/>
            <person name="Eckenberg R."/>
            <person name="Petit J.-L."/>
            <person name="Fonknechten N."/>
            <person name="Da Silva C."/>
            <person name="Cattolico L."/>
            <person name="Levy M."/>
            <person name="Barbe V."/>
            <person name="De Berardinis V."/>
            <person name="Ureta-Vidal A."/>
            <person name="Pelletier E."/>
            <person name="Vico V."/>
            <person name="Anthouard V."/>
            <person name="Rowen L."/>
            <person name="Madan A."/>
            <person name="Qin S."/>
            <person name="Sun H."/>
            <person name="Du H."/>
            <person name="Pepin K."/>
            <person name="Artiguenave F."/>
            <person name="Robert C."/>
            <person name="Cruaud C."/>
            <person name="Bruels T."/>
            <person name="Jaillon O."/>
            <person name="Friedlander L."/>
            <person name="Samson G."/>
            <person name="Brottier P."/>
            <person name="Cure S."/>
            <person name="Segurens B."/>
            <person name="Aniere F."/>
            <person name="Samain S."/>
            <person name="Crespeau H."/>
            <person name="Abbasi N."/>
            <person name="Aiach N."/>
            <person name="Boscus D."/>
            <person name="Dickhoff R."/>
            <person name="Dors M."/>
            <person name="Dubois I."/>
            <person name="Friedman C."/>
            <person name="Gouyvenoux M."/>
            <person name="James R."/>
            <person name="Madan A."/>
            <person name="Mairey-Estrada B."/>
            <person name="Mangenot S."/>
            <person name="Martins N."/>
            <person name="Menard M."/>
            <person name="Oztas S."/>
            <person name="Ratcliffe A."/>
            <person name="Shaffer T."/>
            <person name="Trask B."/>
            <person name="Vacherie B."/>
            <person name="Bellemere C."/>
            <person name="Belser C."/>
            <person name="Besnard-Gonnet M."/>
            <person name="Bartol-Mavel D."/>
            <person name="Boutard M."/>
            <person name="Briez-Silla S."/>
            <person name="Combette S."/>
            <person name="Dufosse-Laurent V."/>
            <person name="Ferron C."/>
            <person name="Lechaplais C."/>
            <person name="Louesse C."/>
            <person name="Muselet D."/>
            <person name="Magdelenat G."/>
            <person name="Pateau E."/>
            <person name="Petit E."/>
            <person name="Sirvain-Trukniewicz P."/>
            <person name="Trybou A."/>
            <person name="Vega-Czarny N."/>
            <person name="Bataille E."/>
            <person name="Bluet E."/>
            <person name="Bordelais I."/>
            <person name="Dubois M."/>
            <person name="Dumont C."/>
            <person name="Guerin T."/>
            <person name="Haffray S."/>
            <person name="Hammadi R."/>
            <person name="Muanga J."/>
            <person name="Pellouin V."/>
            <person name="Robert D."/>
            <person name="Wunderle E."/>
            <person name="Gauguet G."/>
            <person name="Roy A."/>
            <person name="Sainte-Marthe L."/>
            <person name="Verdier J."/>
            <person name="Verdier-Discala C."/>
            <person name="Hillier L.W."/>
            <person name="Fulton L."/>
            <person name="McPherson J."/>
            <person name="Matsuda F."/>
            <person name="Wilson R."/>
            <person name="Scarpelli C."/>
            <person name="Gyapay G."/>
            <person name="Wincker P."/>
            <person name="Saurin W."/>
            <person name="Quetier F."/>
            <person name="Waterston R."/>
            <person name="Hood L."/>
            <person name="Weissenbach J."/>
        </authorList>
    </citation>
    <scope>NUCLEOTIDE SEQUENCE [LARGE SCALE GENOMIC DNA]</scope>
</reference>
<reference key="3">
    <citation type="journal article" date="2004" name="Genome Res.">
        <title>The status, quality, and expansion of the NIH full-length cDNA project: the Mammalian Gene Collection (MGC).</title>
        <authorList>
            <consortium name="The MGC Project Team"/>
        </authorList>
    </citation>
    <scope>NUCLEOTIDE SEQUENCE [LARGE SCALE MRNA]</scope>
    <scope>VARIANT TRP-3</scope>
    <source>
        <tissue>Heart</tissue>
        <tissue>Lung</tissue>
    </source>
</reference>
<reference key="4">
    <citation type="journal article" date="2017" name="J. Proteome Res.">
        <title>Validating Missing Proteins in Human Sperm Cells by Targeted Mass-Spectrometry- and Antibody-based Methods.</title>
        <authorList>
            <person name="Carapito C."/>
            <person name="Duek P."/>
            <person name="Macron C."/>
            <person name="Seffals M."/>
            <person name="Rondel K."/>
            <person name="Delalande F."/>
            <person name="Lindskog C."/>
            <person name="Freour T."/>
            <person name="Vandenbrouck Y."/>
            <person name="Lane L."/>
            <person name="Pineau C."/>
        </authorList>
    </citation>
    <scope>IDENTIFICATION</scope>
    <scope>SUBCELLULAR LOCATION</scope>
    <scope>TISSUE SPECIFICITY</scope>
</reference>
<evidence type="ECO:0000256" key="1">
    <source>
        <dbReference type="SAM" id="MobiDB-lite"/>
    </source>
</evidence>
<evidence type="ECO:0000269" key="2">
    <source>
    </source>
</evidence>
<evidence type="ECO:0000269" key="3">
    <source>
    </source>
</evidence>
<evidence type="ECO:0000303" key="4">
    <source>
    </source>
</evidence>
<evidence type="ECO:0000305" key="5"/>
<evidence type="ECO:0000312" key="6">
    <source>
        <dbReference type="HGNC" id="HGNC:26375"/>
    </source>
</evidence>